<evidence type="ECO:0000255" key="1">
    <source>
        <dbReference type="HAMAP-Rule" id="MF_00530"/>
    </source>
</evidence>
<evidence type="ECO:0000256" key="2">
    <source>
        <dbReference type="SAM" id="MobiDB-lite"/>
    </source>
</evidence>
<dbReference type="EMBL" id="CP000159">
    <property type="protein sequence ID" value="ABC44149.1"/>
    <property type="molecule type" value="Genomic_DNA"/>
</dbReference>
<dbReference type="RefSeq" id="WP_011405147.1">
    <property type="nucleotide sequence ID" value="NC_007677.1"/>
</dbReference>
<dbReference type="RefSeq" id="YP_446529.1">
    <property type="nucleotide sequence ID" value="NC_007677.1"/>
</dbReference>
<dbReference type="SMR" id="Q2RZV2"/>
<dbReference type="STRING" id="309807.SRU_2430"/>
<dbReference type="EnsemblBacteria" id="ABC44149">
    <property type="protein sequence ID" value="ABC44149"/>
    <property type="gene ID" value="SRU_2430"/>
</dbReference>
<dbReference type="GeneID" id="83729449"/>
<dbReference type="KEGG" id="sru:SRU_2430"/>
<dbReference type="PATRIC" id="fig|309807.25.peg.2532"/>
<dbReference type="eggNOG" id="COG0355">
    <property type="taxonomic scope" value="Bacteria"/>
</dbReference>
<dbReference type="HOGENOM" id="CLU_084338_1_1_10"/>
<dbReference type="OrthoDB" id="5294255at2"/>
<dbReference type="Proteomes" id="UP000008674">
    <property type="component" value="Chromosome"/>
</dbReference>
<dbReference type="GO" id="GO:0005886">
    <property type="term" value="C:plasma membrane"/>
    <property type="evidence" value="ECO:0007669"/>
    <property type="project" value="UniProtKB-SubCell"/>
</dbReference>
<dbReference type="GO" id="GO:0045259">
    <property type="term" value="C:proton-transporting ATP synthase complex"/>
    <property type="evidence" value="ECO:0007669"/>
    <property type="project" value="UniProtKB-KW"/>
</dbReference>
<dbReference type="GO" id="GO:0005524">
    <property type="term" value="F:ATP binding"/>
    <property type="evidence" value="ECO:0007669"/>
    <property type="project" value="UniProtKB-UniRule"/>
</dbReference>
<dbReference type="GO" id="GO:0046933">
    <property type="term" value="F:proton-transporting ATP synthase activity, rotational mechanism"/>
    <property type="evidence" value="ECO:0007669"/>
    <property type="project" value="UniProtKB-UniRule"/>
</dbReference>
<dbReference type="CDD" id="cd12152">
    <property type="entry name" value="F1-ATPase_delta"/>
    <property type="match status" value="1"/>
</dbReference>
<dbReference type="Gene3D" id="1.20.5.440">
    <property type="entry name" value="ATP synthase delta/epsilon subunit, C-terminal domain"/>
    <property type="match status" value="1"/>
</dbReference>
<dbReference type="Gene3D" id="2.60.15.10">
    <property type="entry name" value="F0F1 ATP synthase delta/epsilon subunit, N-terminal"/>
    <property type="match status" value="1"/>
</dbReference>
<dbReference type="HAMAP" id="MF_00530">
    <property type="entry name" value="ATP_synth_epsil_bac"/>
    <property type="match status" value="1"/>
</dbReference>
<dbReference type="InterPro" id="IPR001469">
    <property type="entry name" value="ATP_synth_F1_dsu/esu"/>
</dbReference>
<dbReference type="InterPro" id="IPR020546">
    <property type="entry name" value="ATP_synth_F1_dsu/esu_N"/>
</dbReference>
<dbReference type="InterPro" id="IPR020547">
    <property type="entry name" value="ATP_synth_F1_esu_C"/>
</dbReference>
<dbReference type="InterPro" id="IPR036771">
    <property type="entry name" value="ATPsynth_dsu/esu_N"/>
</dbReference>
<dbReference type="NCBIfam" id="TIGR01216">
    <property type="entry name" value="ATP_synt_epsi"/>
    <property type="match status" value="1"/>
</dbReference>
<dbReference type="PANTHER" id="PTHR13822">
    <property type="entry name" value="ATP SYNTHASE DELTA/EPSILON CHAIN"/>
    <property type="match status" value="1"/>
</dbReference>
<dbReference type="PANTHER" id="PTHR13822:SF10">
    <property type="entry name" value="ATP SYNTHASE EPSILON CHAIN, CHLOROPLASTIC"/>
    <property type="match status" value="1"/>
</dbReference>
<dbReference type="Pfam" id="PF00401">
    <property type="entry name" value="ATP-synt_DE"/>
    <property type="match status" value="1"/>
</dbReference>
<dbReference type="Pfam" id="PF02823">
    <property type="entry name" value="ATP-synt_DE_N"/>
    <property type="match status" value="1"/>
</dbReference>
<dbReference type="SUPFAM" id="SSF51344">
    <property type="entry name" value="Epsilon subunit of F1F0-ATP synthase N-terminal domain"/>
    <property type="match status" value="1"/>
</dbReference>
<sequence length="149" mass="16440">MADELTVDIVTPDERSFQGPANGVRAPGIEGSFEVREDHAPMIAAFGIGPLIVKTQAAHEYADMHNDRIIFATSGGFLEVIDNKVTVLAETVEPASEIDVERAESAEERAKRRLEEGVQEEERETHEAARDRARNRLRVAMGKVGTRQS</sequence>
<feature type="chain" id="PRO_0000265885" description="ATP synthase epsilon chain">
    <location>
        <begin position="1"/>
        <end position="149"/>
    </location>
</feature>
<feature type="region of interest" description="Disordered" evidence="2">
    <location>
        <begin position="99"/>
        <end position="149"/>
    </location>
</feature>
<feature type="compositionally biased region" description="Basic and acidic residues" evidence="2">
    <location>
        <begin position="99"/>
        <end position="116"/>
    </location>
</feature>
<feature type="compositionally biased region" description="Basic and acidic residues" evidence="2">
    <location>
        <begin position="123"/>
        <end position="134"/>
    </location>
</feature>
<comment type="function">
    <text evidence="1">Produces ATP from ADP in the presence of a proton gradient across the membrane.</text>
</comment>
<comment type="subunit">
    <text>F-type ATPases have 2 components, CF(1) - the catalytic core - and CF(0) - the membrane proton channel. CF(1) has five subunits: alpha(3), beta(3), gamma(1), delta(1), epsilon(1). CF(0) has three main subunits: a, b and c.</text>
</comment>
<comment type="subcellular location">
    <subcellularLocation>
        <location evidence="1">Cell inner membrane</location>
        <topology evidence="1">Peripheral membrane protein</topology>
    </subcellularLocation>
</comment>
<comment type="similarity">
    <text evidence="1">Belongs to the ATPase epsilon chain family.</text>
</comment>
<accession>Q2RZV2</accession>
<organism>
    <name type="scientific">Salinibacter ruber (strain DSM 13855 / M31)</name>
    <dbReference type="NCBI Taxonomy" id="309807"/>
    <lineage>
        <taxon>Bacteria</taxon>
        <taxon>Pseudomonadati</taxon>
        <taxon>Rhodothermota</taxon>
        <taxon>Rhodothermia</taxon>
        <taxon>Rhodothermales</taxon>
        <taxon>Salinibacteraceae</taxon>
        <taxon>Salinibacter</taxon>
    </lineage>
</organism>
<name>ATPE_SALRD</name>
<reference key="1">
    <citation type="journal article" date="2005" name="Proc. Natl. Acad. Sci. U.S.A.">
        <title>The genome of Salinibacter ruber: convergence and gene exchange among hyperhalophilic bacteria and archaea.</title>
        <authorList>
            <person name="Mongodin E.F."/>
            <person name="Nelson K.E."/>
            <person name="Daugherty S."/>
            <person name="DeBoy R.T."/>
            <person name="Wister J."/>
            <person name="Khouri H."/>
            <person name="Weidman J."/>
            <person name="Walsh D.A."/>
            <person name="Papke R.T."/>
            <person name="Sanchez Perez G."/>
            <person name="Sharma A.K."/>
            <person name="Nesbo C.L."/>
            <person name="MacLeod D."/>
            <person name="Bapteste E."/>
            <person name="Doolittle W.F."/>
            <person name="Charlebois R.L."/>
            <person name="Legault B."/>
            <person name="Rodriguez-Valera F."/>
        </authorList>
    </citation>
    <scope>NUCLEOTIDE SEQUENCE [LARGE SCALE GENOMIC DNA]</scope>
    <source>
        <strain>DSM 13855 / CECT 5946 / M31</strain>
    </source>
</reference>
<keyword id="KW-0066">ATP synthesis</keyword>
<keyword id="KW-0997">Cell inner membrane</keyword>
<keyword id="KW-1003">Cell membrane</keyword>
<keyword id="KW-0139">CF(1)</keyword>
<keyword id="KW-0375">Hydrogen ion transport</keyword>
<keyword id="KW-0406">Ion transport</keyword>
<keyword id="KW-0472">Membrane</keyword>
<keyword id="KW-1185">Reference proteome</keyword>
<keyword id="KW-0813">Transport</keyword>
<protein>
    <recommendedName>
        <fullName evidence="1">ATP synthase epsilon chain</fullName>
    </recommendedName>
    <alternativeName>
        <fullName evidence="1">ATP synthase F1 sector epsilon subunit</fullName>
    </alternativeName>
    <alternativeName>
        <fullName evidence="1">F-ATPase epsilon subunit</fullName>
    </alternativeName>
</protein>
<proteinExistence type="inferred from homology"/>
<gene>
    <name evidence="1" type="primary">atpC</name>
    <name type="ordered locus">SRU_2430</name>
</gene>